<keyword id="KW-0226">DNA condensation</keyword>
<keyword id="KW-0238">DNA-binding</keyword>
<sequence length="90" mass="9535">MNKTQLIDVIADKADLSKAQAKLALESTLAAITESLKEGDAVQLVGFGTFKVNHRSERTGRNPQTGKEIKIAAANVPAFVSGKALKDAVK</sequence>
<organism>
    <name type="scientific">Serratia marcescens</name>
    <dbReference type="NCBI Taxonomy" id="615"/>
    <lineage>
        <taxon>Bacteria</taxon>
        <taxon>Pseudomonadati</taxon>
        <taxon>Pseudomonadota</taxon>
        <taxon>Gammaproteobacteria</taxon>
        <taxon>Enterobacterales</taxon>
        <taxon>Yersiniaceae</taxon>
        <taxon>Serratia</taxon>
    </lineage>
</organism>
<name>DBHA_SERMA</name>
<evidence type="ECO:0000250" key="1"/>
<evidence type="ECO:0000305" key="2"/>
<proteinExistence type="inferred from homology"/>
<protein>
    <recommendedName>
        <fullName>DNA-binding protein HU-alpha</fullName>
    </recommendedName>
    <alternativeName>
        <fullName>HU-2</fullName>
    </alternativeName>
    <alternativeName>
        <fullName>NS2</fullName>
    </alternativeName>
</protein>
<comment type="function">
    <text evidence="1">Histone-like DNA-binding protein which is capable of wrapping DNA to stabilize it, and thus to prevent its denaturation under extreme environmental conditions.</text>
</comment>
<comment type="subunit">
    <text>Heterodimer of an alpha and a beta chain.</text>
</comment>
<comment type="similarity">
    <text evidence="2">Belongs to the bacterial histone-like protein family.</text>
</comment>
<feature type="chain" id="PRO_0000104972" description="DNA-binding protein HU-alpha">
    <location>
        <begin position="1"/>
        <end position="90"/>
    </location>
</feature>
<gene>
    <name type="primary">hupA</name>
</gene>
<accession>P52680</accession>
<reference key="1">
    <citation type="journal article" date="1996" name="J. Bacteriol.">
        <title>Serratia marcescens contains a heterodimeric HU protein like Escherichia coli and Salmonella typhimurium.</title>
        <authorList>
            <person name="Oberto J."/>
            <person name="Rouviere-Yaniv J."/>
        </authorList>
    </citation>
    <scope>NUCLEOTIDE SEQUENCE [GENOMIC DNA]</scope>
    <source>
        <strain>SM369</strain>
    </source>
</reference>
<dbReference type="EMBL" id="U25149">
    <property type="protein sequence ID" value="AAA65987.1"/>
    <property type="molecule type" value="Genomic_DNA"/>
</dbReference>
<dbReference type="RefSeq" id="WP_004929874.1">
    <property type="nucleotide sequence ID" value="NZ_WVHX01000040.1"/>
</dbReference>
<dbReference type="SMR" id="P52680"/>
<dbReference type="STRING" id="273526.SMDB11_4394"/>
<dbReference type="GeneID" id="98186143"/>
<dbReference type="OrthoDB" id="9799835at2"/>
<dbReference type="GO" id="GO:0005829">
    <property type="term" value="C:cytosol"/>
    <property type="evidence" value="ECO:0007669"/>
    <property type="project" value="TreeGrafter"/>
</dbReference>
<dbReference type="GO" id="GO:0003677">
    <property type="term" value="F:DNA binding"/>
    <property type="evidence" value="ECO:0007669"/>
    <property type="project" value="UniProtKB-KW"/>
</dbReference>
<dbReference type="GO" id="GO:0030527">
    <property type="term" value="F:structural constituent of chromatin"/>
    <property type="evidence" value="ECO:0007669"/>
    <property type="project" value="InterPro"/>
</dbReference>
<dbReference type="GO" id="GO:0030261">
    <property type="term" value="P:chromosome condensation"/>
    <property type="evidence" value="ECO:0007669"/>
    <property type="project" value="UniProtKB-KW"/>
</dbReference>
<dbReference type="CDD" id="cd13831">
    <property type="entry name" value="HU"/>
    <property type="match status" value="1"/>
</dbReference>
<dbReference type="FunFam" id="4.10.520.10:FF:000001">
    <property type="entry name" value="DNA-binding protein HU"/>
    <property type="match status" value="1"/>
</dbReference>
<dbReference type="Gene3D" id="4.10.520.10">
    <property type="entry name" value="IHF-like DNA-binding proteins"/>
    <property type="match status" value="1"/>
</dbReference>
<dbReference type="InterPro" id="IPR000119">
    <property type="entry name" value="Hist_DNA-bd"/>
</dbReference>
<dbReference type="InterPro" id="IPR020816">
    <property type="entry name" value="Histone-like_DNA-bd_CS"/>
</dbReference>
<dbReference type="InterPro" id="IPR010992">
    <property type="entry name" value="IHF-like_DNA-bd_dom_sf"/>
</dbReference>
<dbReference type="NCBIfam" id="NF008023">
    <property type="entry name" value="PRK10753.1"/>
    <property type="match status" value="1"/>
</dbReference>
<dbReference type="PANTHER" id="PTHR33175">
    <property type="entry name" value="DNA-BINDING PROTEIN HU"/>
    <property type="match status" value="1"/>
</dbReference>
<dbReference type="PANTHER" id="PTHR33175:SF12">
    <property type="entry name" value="DNA-BINDING PROTEIN HU-ALPHA"/>
    <property type="match status" value="1"/>
</dbReference>
<dbReference type="Pfam" id="PF00216">
    <property type="entry name" value="Bac_DNA_binding"/>
    <property type="match status" value="1"/>
</dbReference>
<dbReference type="PRINTS" id="PR01727">
    <property type="entry name" value="DNABINDINGHU"/>
</dbReference>
<dbReference type="SMART" id="SM00411">
    <property type="entry name" value="BHL"/>
    <property type="match status" value="1"/>
</dbReference>
<dbReference type="SUPFAM" id="SSF47729">
    <property type="entry name" value="IHF-like DNA-binding proteins"/>
    <property type="match status" value="1"/>
</dbReference>
<dbReference type="PROSITE" id="PS00045">
    <property type="entry name" value="HISTONE_LIKE"/>
    <property type="match status" value="1"/>
</dbReference>